<comment type="similarity">
    <text evidence="1">Belongs to the eukaryotic ribosomal protein eS6 family.</text>
</comment>
<dbReference type="EMBL" id="CP000660">
    <property type="protein sequence ID" value="ABP50217.1"/>
    <property type="molecule type" value="Genomic_DNA"/>
</dbReference>
<dbReference type="SMR" id="A4WIK0"/>
<dbReference type="STRING" id="340102.Pars_0626"/>
<dbReference type="KEGG" id="pas:Pars_0626"/>
<dbReference type="HOGENOM" id="CLU_109671_1_1_2"/>
<dbReference type="OrthoDB" id="7793at2157"/>
<dbReference type="PhylomeDB" id="A4WIK0"/>
<dbReference type="Proteomes" id="UP000001567">
    <property type="component" value="Chromosome"/>
</dbReference>
<dbReference type="GO" id="GO:1990904">
    <property type="term" value="C:ribonucleoprotein complex"/>
    <property type="evidence" value="ECO:0007669"/>
    <property type="project" value="UniProtKB-KW"/>
</dbReference>
<dbReference type="GO" id="GO:0005840">
    <property type="term" value="C:ribosome"/>
    <property type="evidence" value="ECO:0007669"/>
    <property type="project" value="UniProtKB-KW"/>
</dbReference>
<dbReference type="GO" id="GO:0003735">
    <property type="term" value="F:structural constituent of ribosome"/>
    <property type="evidence" value="ECO:0007669"/>
    <property type="project" value="InterPro"/>
</dbReference>
<dbReference type="GO" id="GO:0006412">
    <property type="term" value="P:translation"/>
    <property type="evidence" value="ECO:0007669"/>
    <property type="project" value="UniProtKB-UniRule"/>
</dbReference>
<dbReference type="HAMAP" id="MF_00512">
    <property type="entry name" value="Ribosomal_eS6"/>
    <property type="match status" value="1"/>
</dbReference>
<dbReference type="InterPro" id="IPR001377">
    <property type="entry name" value="Ribosomal_eS6"/>
</dbReference>
<dbReference type="InterPro" id="IPR020924">
    <property type="entry name" value="Ribosomal_eS6_arc"/>
</dbReference>
<dbReference type="InterPro" id="IPR018282">
    <property type="entry name" value="Ribosomal_eS6_CS"/>
</dbReference>
<dbReference type="NCBIfam" id="NF003293">
    <property type="entry name" value="PRK04290.1-2"/>
    <property type="match status" value="1"/>
</dbReference>
<dbReference type="PANTHER" id="PTHR11502">
    <property type="entry name" value="40S RIBOSOMAL PROTEIN S6"/>
    <property type="match status" value="1"/>
</dbReference>
<dbReference type="Pfam" id="PF01092">
    <property type="entry name" value="Ribosomal_S6e"/>
    <property type="match status" value="1"/>
</dbReference>
<dbReference type="SMART" id="SM01405">
    <property type="entry name" value="Ribosomal_S6e"/>
    <property type="match status" value="1"/>
</dbReference>
<dbReference type="PROSITE" id="PS00578">
    <property type="entry name" value="RIBOSOMAL_S6E"/>
    <property type="match status" value="1"/>
</dbReference>
<sequence length="148" mass="15921">MPTFKLVLSDPISGKAMQFEIKDPLAQRFVGLKIGDEIDGVILKDFISLPKGAKIKITGGSGIEGAPMVPGVPGPVKRYILAEGPPGYRPKKRGMRRKKLVRGDTISDSIVQINAVIVYPKDYSGPPAIPIGAKELEKLTKKEEAAAQ</sequence>
<protein>
    <recommendedName>
        <fullName evidence="1">Small ribosomal subunit protein eS6</fullName>
    </recommendedName>
    <alternativeName>
        <fullName evidence="2">30S ribosomal protein S6e</fullName>
    </alternativeName>
</protein>
<accession>A4WIK0</accession>
<name>RS6E_PYRAR</name>
<gene>
    <name evidence="1" type="primary">rps6e</name>
    <name type="ordered locus">Pars_0626</name>
</gene>
<feature type="chain" id="PRO_1000050640" description="Small ribosomal subunit protein eS6">
    <location>
        <begin position="1"/>
        <end position="148"/>
    </location>
</feature>
<organism>
    <name type="scientific">Pyrobaculum arsenaticum (strain DSM 13514 / JCM 11321 / PZ6)</name>
    <dbReference type="NCBI Taxonomy" id="340102"/>
    <lineage>
        <taxon>Archaea</taxon>
        <taxon>Thermoproteota</taxon>
        <taxon>Thermoprotei</taxon>
        <taxon>Thermoproteales</taxon>
        <taxon>Thermoproteaceae</taxon>
        <taxon>Pyrobaculum</taxon>
    </lineage>
</organism>
<proteinExistence type="inferred from homology"/>
<reference key="1">
    <citation type="submission" date="2007-04" db="EMBL/GenBank/DDBJ databases">
        <title>Complete sequence of Pyrobaculum arsenaticum DSM 13514.</title>
        <authorList>
            <consortium name="US DOE Joint Genome Institute"/>
            <person name="Copeland A."/>
            <person name="Lucas S."/>
            <person name="Lapidus A."/>
            <person name="Barry K."/>
            <person name="Glavina del Rio T."/>
            <person name="Dalin E."/>
            <person name="Tice H."/>
            <person name="Pitluck S."/>
            <person name="Chain P."/>
            <person name="Malfatti S."/>
            <person name="Shin M."/>
            <person name="Vergez L."/>
            <person name="Schmutz J."/>
            <person name="Larimer F."/>
            <person name="Land M."/>
            <person name="Hauser L."/>
            <person name="Kyrpides N."/>
            <person name="Mikhailova N."/>
            <person name="Cozen A.E."/>
            <person name="Fitz-Gibbon S.T."/>
            <person name="House C.H."/>
            <person name="Saltikov C."/>
            <person name="Lowe T.M."/>
            <person name="Richardson P."/>
        </authorList>
    </citation>
    <scope>NUCLEOTIDE SEQUENCE [LARGE SCALE GENOMIC DNA]</scope>
    <source>
        <strain>ATCC 700994 / DSM 13514 / JCM 11321 / PZ6</strain>
    </source>
</reference>
<keyword id="KW-0687">Ribonucleoprotein</keyword>
<keyword id="KW-0689">Ribosomal protein</keyword>
<evidence type="ECO:0000255" key="1">
    <source>
        <dbReference type="HAMAP-Rule" id="MF_00512"/>
    </source>
</evidence>
<evidence type="ECO:0000305" key="2"/>